<proteinExistence type="evidence at protein level"/>
<gene>
    <name type="primary">TRR1</name>
    <name type="ordered locus">YDR353W</name>
    <name type="ORF">D9476.5</name>
</gene>
<dbReference type="EC" id="1.8.1.9" evidence="5"/>
<dbReference type="EMBL" id="U10274">
    <property type="protein sequence ID" value="AAA64747.1"/>
    <property type="molecule type" value="Genomic_DNA"/>
</dbReference>
<dbReference type="EMBL" id="U28372">
    <property type="protein sequence ID" value="AAB64789.1"/>
    <property type="molecule type" value="Genomic_DNA"/>
</dbReference>
<dbReference type="EMBL" id="X04273">
    <property type="status" value="NOT_ANNOTATED_CDS"/>
    <property type="molecule type" value="Genomic_DNA"/>
</dbReference>
<dbReference type="EMBL" id="AY557749">
    <property type="protein sequence ID" value="AAS56075.1"/>
    <property type="molecule type" value="Genomic_DNA"/>
</dbReference>
<dbReference type="EMBL" id="BK006938">
    <property type="protein sequence ID" value="DAA12193.1"/>
    <property type="molecule type" value="Genomic_DNA"/>
</dbReference>
<dbReference type="PIR" id="S61150">
    <property type="entry name" value="S61150"/>
</dbReference>
<dbReference type="RefSeq" id="NP_010640.1">
    <property type="nucleotide sequence ID" value="NM_001180661.1"/>
</dbReference>
<dbReference type="PDB" id="3D8X">
    <property type="method" value="X-ray"/>
    <property type="resolution" value="2.80 A"/>
    <property type="chains" value="A/B=2-319"/>
</dbReference>
<dbReference type="PDB" id="3ITJ">
    <property type="method" value="X-ray"/>
    <property type="resolution" value="2.40 A"/>
    <property type="chains" value="A/B/C/D=2-319"/>
</dbReference>
<dbReference type="PDBsum" id="3D8X"/>
<dbReference type="PDBsum" id="3ITJ"/>
<dbReference type="SMR" id="P29509"/>
<dbReference type="BioGRID" id="32410">
    <property type="interactions" value="70"/>
</dbReference>
<dbReference type="DIP" id="DIP-4319N"/>
<dbReference type="FunCoup" id="P29509">
    <property type="interactions" value="284"/>
</dbReference>
<dbReference type="IntAct" id="P29509">
    <property type="interactions" value="16"/>
</dbReference>
<dbReference type="MINT" id="P29509"/>
<dbReference type="STRING" id="4932.YDR353W"/>
<dbReference type="iPTMnet" id="P29509"/>
<dbReference type="PaxDb" id="4932-YDR353W"/>
<dbReference type="PeptideAtlas" id="P29509"/>
<dbReference type="EnsemblFungi" id="YDR353W_mRNA">
    <property type="protein sequence ID" value="YDR353W"/>
    <property type="gene ID" value="YDR353W"/>
</dbReference>
<dbReference type="GeneID" id="851955"/>
<dbReference type="KEGG" id="sce:YDR353W"/>
<dbReference type="AGR" id="SGD:S000002761"/>
<dbReference type="SGD" id="S000002761">
    <property type="gene designation" value="TRR1"/>
</dbReference>
<dbReference type="VEuPathDB" id="FungiDB:YDR353W"/>
<dbReference type="eggNOG" id="KOG0404">
    <property type="taxonomic scope" value="Eukaryota"/>
</dbReference>
<dbReference type="GeneTree" id="ENSGT00940000176591"/>
<dbReference type="HOGENOM" id="CLU_031864_5_1_1"/>
<dbReference type="InParanoid" id="P29509"/>
<dbReference type="OMA" id="GPCHVLK"/>
<dbReference type="OrthoDB" id="371245at2759"/>
<dbReference type="BioCyc" id="YEAST:YDR353W-MONOMER"/>
<dbReference type="BRENDA" id="1.8.1.9">
    <property type="organism ID" value="984"/>
</dbReference>
<dbReference type="BioGRID-ORCS" id="851955">
    <property type="hits" value="6 hits in 10 CRISPR screens"/>
</dbReference>
<dbReference type="EvolutionaryTrace" id="P29509"/>
<dbReference type="PRO" id="PR:P29509"/>
<dbReference type="Proteomes" id="UP000002311">
    <property type="component" value="Chromosome IV"/>
</dbReference>
<dbReference type="RNAct" id="P29509">
    <property type="molecule type" value="protein"/>
</dbReference>
<dbReference type="GO" id="GO:0005829">
    <property type="term" value="C:cytosol"/>
    <property type="evidence" value="ECO:0000314"/>
    <property type="project" value="SGD"/>
</dbReference>
<dbReference type="GO" id="GO:0005758">
    <property type="term" value="C:mitochondrial intermembrane space"/>
    <property type="evidence" value="ECO:0000314"/>
    <property type="project" value="SGD"/>
</dbReference>
<dbReference type="GO" id="GO:0005739">
    <property type="term" value="C:mitochondrion"/>
    <property type="evidence" value="ECO:0007005"/>
    <property type="project" value="SGD"/>
</dbReference>
<dbReference type="GO" id="GO:0008198">
    <property type="term" value="F:ferrous iron binding"/>
    <property type="evidence" value="ECO:0000314"/>
    <property type="project" value="SGD"/>
</dbReference>
<dbReference type="GO" id="GO:0004791">
    <property type="term" value="F:thioredoxin-disulfide reductase (NADPH) activity"/>
    <property type="evidence" value="ECO:0000314"/>
    <property type="project" value="SGD"/>
</dbReference>
<dbReference type="GO" id="GO:0045454">
    <property type="term" value="P:cell redox homeostasis"/>
    <property type="evidence" value="ECO:0000314"/>
    <property type="project" value="SGD"/>
</dbReference>
<dbReference type="GO" id="GO:0034599">
    <property type="term" value="P:cellular response to oxidative stress"/>
    <property type="evidence" value="ECO:0000316"/>
    <property type="project" value="SGD"/>
</dbReference>
<dbReference type="GO" id="GO:0019430">
    <property type="term" value="P:removal of superoxide radicals"/>
    <property type="evidence" value="ECO:0007669"/>
    <property type="project" value="InterPro"/>
</dbReference>
<dbReference type="FunFam" id="3.50.50.60:FF:000064">
    <property type="entry name" value="Thioredoxin reductase"/>
    <property type="match status" value="1"/>
</dbReference>
<dbReference type="Gene3D" id="3.50.50.60">
    <property type="entry name" value="FAD/NAD(P)-binding domain"/>
    <property type="match status" value="2"/>
</dbReference>
<dbReference type="InterPro" id="IPR036188">
    <property type="entry name" value="FAD/NAD-bd_sf"/>
</dbReference>
<dbReference type="InterPro" id="IPR023753">
    <property type="entry name" value="FAD/NAD-binding_dom"/>
</dbReference>
<dbReference type="InterPro" id="IPR050097">
    <property type="entry name" value="Ferredoxin-NADP_redctase_2"/>
</dbReference>
<dbReference type="InterPro" id="IPR008255">
    <property type="entry name" value="Pyr_nucl-diS_OxRdtase_2_AS"/>
</dbReference>
<dbReference type="InterPro" id="IPR005982">
    <property type="entry name" value="Thioredox_Rdtase"/>
</dbReference>
<dbReference type="NCBIfam" id="TIGR01292">
    <property type="entry name" value="TRX_reduct"/>
    <property type="match status" value="1"/>
</dbReference>
<dbReference type="PANTHER" id="PTHR48105">
    <property type="entry name" value="THIOREDOXIN REDUCTASE 1-RELATED-RELATED"/>
    <property type="match status" value="1"/>
</dbReference>
<dbReference type="Pfam" id="PF07992">
    <property type="entry name" value="Pyr_redox_2"/>
    <property type="match status" value="1"/>
</dbReference>
<dbReference type="PRINTS" id="PR00368">
    <property type="entry name" value="FADPNR"/>
</dbReference>
<dbReference type="PRINTS" id="PR00469">
    <property type="entry name" value="PNDRDTASEII"/>
</dbReference>
<dbReference type="SUPFAM" id="SSF51905">
    <property type="entry name" value="FAD/NAD(P)-binding domain"/>
    <property type="match status" value="1"/>
</dbReference>
<dbReference type="PROSITE" id="PS00573">
    <property type="entry name" value="PYRIDINE_REDOX_2"/>
    <property type="match status" value="1"/>
</dbReference>
<feature type="initiator methionine" description="Removed" evidence="5">
    <location>
        <position position="1"/>
    </location>
</feature>
<feature type="chain" id="PRO_0000166770" description="Thioredoxin reductase 1">
    <location>
        <begin position="2"/>
        <end position="319"/>
    </location>
</feature>
<feature type="binding site" evidence="2 3">
    <location>
        <begin position="11"/>
        <end position="14"/>
    </location>
    <ligand>
        <name>FAD</name>
        <dbReference type="ChEBI" id="CHEBI:57692"/>
    </ligand>
</feature>
<feature type="binding site" evidence="2 3">
    <location>
        <begin position="40"/>
        <end position="41"/>
    </location>
    <ligand>
        <name>FAD</name>
        <dbReference type="ChEBI" id="CHEBI:57692"/>
    </ligand>
</feature>
<feature type="binding site" evidence="2 3">
    <location>
        <position position="45"/>
    </location>
    <ligand>
        <name>FAD</name>
        <dbReference type="ChEBI" id="CHEBI:57692"/>
    </ligand>
</feature>
<feature type="binding site" evidence="2 3">
    <location>
        <position position="54"/>
    </location>
    <ligand>
        <name>FAD</name>
        <dbReference type="ChEBI" id="CHEBI:57692"/>
    </ligand>
</feature>
<feature type="binding site" evidence="2 3">
    <location>
        <position position="87"/>
    </location>
    <ligand>
        <name>FAD</name>
        <dbReference type="ChEBI" id="CHEBI:57692"/>
    </ligand>
</feature>
<feature type="binding site" evidence="2 3">
    <location>
        <position position="145"/>
    </location>
    <ligand>
        <name>FAD</name>
        <dbReference type="ChEBI" id="CHEBI:57692"/>
    </ligand>
</feature>
<feature type="binding site" evidence="2 3">
    <location>
        <position position="288"/>
    </location>
    <ligand>
        <name>FAD</name>
        <dbReference type="ChEBI" id="CHEBI:57692"/>
    </ligand>
</feature>
<feature type="binding site" evidence="2 3">
    <location>
        <begin position="295"/>
        <end position="297"/>
    </location>
    <ligand>
        <name>FAD</name>
        <dbReference type="ChEBI" id="CHEBI:57692"/>
    </ligand>
</feature>
<feature type="modified residue" description="Phosphoserine" evidence="9">
    <location>
        <position position="303"/>
    </location>
</feature>
<feature type="disulfide bond" description="Redox-active" evidence="3">
    <location>
        <begin position="142"/>
        <end position="145"/>
    </location>
</feature>
<feature type="sequence conflict" description="In Ref. 1; AAA64747." evidence="7" ref="1">
    <original>A</original>
    <variation>V</variation>
    <location>
        <position position="18"/>
    </location>
</feature>
<feature type="sequence conflict" description="In Ref. 1; AAA64747." evidence="7" ref="1">
    <original>T</original>
    <variation>A</variation>
    <location>
        <position position="101"/>
    </location>
</feature>
<feature type="sequence conflict" description="In Ref. 1; AAA64747." evidence="7" ref="1">
    <original>T</original>
    <variation>A</variation>
    <location>
        <position position="111"/>
    </location>
</feature>
<feature type="sequence conflict" description="In Ref. 1; AAA64747." evidence="7" ref="1">
    <original>VFMLVRKDHLRASTIMQ</original>
    <variation>CLCLSEKTICVLLPLCK</variation>
    <location>
        <begin position="180"/>
        <end position="196"/>
    </location>
</feature>
<feature type="strand" evidence="11">
    <location>
        <begin position="3"/>
        <end position="9"/>
    </location>
</feature>
<feature type="helix" evidence="11">
    <location>
        <begin position="13"/>
        <end position="24"/>
    </location>
</feature>
<feature type="strand" evidence="11">
    <location>
        <begin position="30"/>
        <end position="32"/>
    </location>
</feature>
<feature type="strand" evidence="11">
    <location>
        <begin position="35"/>
        <end position="37"/>
    </location>
</feature>
<feature type="helix" evidence="11">
    <location>
        <begin position="45"/>
        <end position="48"/>
    </location>
</feature>
<feature type="strand" evidence="11">
    <location>
        <begin position="49"/>
        <end position="52"/>
    </location>
</feature>
<feature type="helix" evidence="11">
    <location>
        <begin position="64"/>
        <end position="77"/>
    </location>
</feature>
<feature type="strand" evidence="11">
    <location>
        <begin position="81"/>
        <end position="83"/>
    </location>
</feature>
<feature type="strand" evidence="11">
    <location>
        <begin position="87"/>
        <end position="91"/>
    </location>
</feature>
<feature type="strand" evidence="11">
    <location>
        <begin position="93"/>
        <end position="101"/>
    </location>
</feature>
<feature type="strand" evidence="11">
    <location>
        <begin position="105"/>
        <end position="107"/>
    </location>
</feature>
<feature type="strand" evidence="11">
    <location>
        <begin position="110"/>
        <end position="117"/>
    </location>
</feature>
<feature type="strand" evidence="11">
    <location>
        <begin position="121"/>
        <end position="123"/>
    </location>
</feature>
<feature type="helix" evidence="11">
    <location>
        <begin position="131"/>
        <end position="134"/>
    </location>
</feature>
<feature type="turn" evidence="11">
    <location>
        <begin position="136"/>
        <end position="138"/>
    </location>
</feature>
<feature type="strand" evidence="11">
    <location>
        <begin position="139"/>
        <end position="141"/>
    </location>
</feature>
<feature type="helix" evidence="11">
    <location>
        <begin position="143"/>
        <end position="146"/>
    </location>
</feature>
<feature type="helix" evidence="11">
    <location>
        <begin position="150"/>
        <end position="152"/>
    </location>
</feature>
<feature type="strand" evidence="11">
    <location>
        <begin position="155"/>
        <end position="160"/>
    </location>
</feature>
<feature type="helix" evidence="11">
    <location>
        <begin position="164"/>
        <end position="173"/>
    </location>
</feature>
<feature type="turn" evidence="11">
    <location>
        <begin position="174"/>
        <end position="176"/>
    </location>
</feature>
<feature type="strand" evidence="11">
    <location>
        <begin position="177"/>
        <end position="183"/>
    </location>
</feature>
<feature type="strand" evidence="11">
    <location>
        <begin position="185"/>
        <end position="188"/>
    </location>
</feature>
<feature type="helix" evidence="11">
    <location>
        <begin position="193"/>
        <end position="201"/>
    </location>
</feature>
<feature type="strand" evidence="11">
    <location>
        <begin position="205"/>
        <end position="208"/>
    </location>
</feature>
<feature type="strand" evidence="11">
    <location>
        <begin position="210"/>
        <end position="230"/>
    </location>
</feature>
<feature type="turn" evidence="11">
    <location>
        <begin position="231"/>
        <end position="234"/>
    </location>
</feature>
<feature type="strand" evidence="11">
    <location>
        <begin position="235"/>
        <end position="240"/>
    </location>
</feature>
<feature type="strand" evidence="11">
    <location>
        <begin position="242"/>
        <end position="246"/>
    </location>
</feature>
<feature type="strand" evidence="11">
    <location>
        <begin position="250"/>
        <end position="252"/>
    </location>
</feature>
<feature type="helix" evidence="11">
    <location>
        <begin position="255"/>
        <end position="257"/>
    </location>
</feature>
<feature type="turn" evidence="10">
    <location>
        <begin position="258"/>
        <end position="260"/>
    </location>
</feature>
<feature type="strand" evidence="11">
    <location>
        <begin position="275"/>
        <end position="277"/>
    </location>
</feature>
<feature type="strand" evidence="11">
    <location>
        <begin position="283"/>
        <end position="285"/>
    </location>
</feature>
<feature type="helix" evidence="11">
    <location>
        <begin position="287"/>
        <end position="290"/>
    </location>
</feature>
<feature type="helix" evidence="11">
    <location>
        <begin position="297"/>
        <end position="315"/>
    </location>
</feature>
<keyword id="KW-0002">3D-structure</keyword>
<keyword id="KW-0963">Cytoplasm</keyword>
<keyword id="KW-0903">Direct protein sequencing</keyword>
<keyword id="KW-1015">Disulfide bond</keyword>
<keyword id="KW-0274">FAD</keyword>
<keyword id="KW-0285">Flavoprotein</keyword>
<keyword id="KW-0496">Mitochondrion</keyword>
<keyword id="KW-0521">NADP</keyword>
<keyword id="KW-0560">Oxidoreductase</keyword>
<keyword id="KW-0597">Phosphoprotein</keyword>
<keyword id="KW-0676">Redox-active center</keyword>
<keyword id="KW-1185">Reference proteome</keyword>
<sequence length="319" mass="34238">MVHNKVTIIGSGPAAHTAAIYLARAEIKPILYEGMMANGIAAGGQLTTTTEIENFPGFPDGLTGSELMDRMREQSTKFGTEIITETVSKVDLSSKPFKLWTEFNEDAEPVTTDAIILATGASAKRMHLPGEETYWQKGISACAVCDGAVPIFRNKPLAVIGGGDSACEEAQFLTKYGSKVFMLVRKDHLRASTIMQKRAEKNEKIEILYNTVALEAKGDGKLLNALRIKNTKKNEETDLPVSGLFYAIGHTPATKIVAGQVDTDEAGYIKTVPGSSLTSVPGFFAAGDVQDSKYRQAITSAGSGCMAALDAEKYLTSLE</sequence>
<name>TRXB1_YEAST</name>
<comment type="function">
    <text evidence="3 5">Central component in the thioredoxin system. Reduces thioredoxins 1 and 2.</text>
</comment>
<comment type="catalytic activity">
    <reaction evidence="5">
        <text>[thioredoxin]-dithiol + NADP(+) = [thioredoxin]-disulfide + NADPH + H(+)</text>
        <dbReference type="Rhea" id="RHEA:20345"/>
        <dbReference type="Rhea" id="RHEA-COMP:10698"/>
        <dbReference type="Rhea" id="RHEA-COMP:10700"/>
        <dbReference type="ChEBI" id="CHEBI:15378"/>
        <dbReference type="ChEBI" id="CHEBI:29950"/>
        <dbReference type="ChEBI" id="CHEBI:50058"/>
        <dbReference type="ChEBI" id="CHEBI:57783"/>
        <dbReference type="ChEBI" id="CHEBI:58349"/>
        <dbReference type="EC" id="1.8.1.9"/>
    </reaction>
    <physiologicalReaction direction="left-to-right" evidence="5">
        <dbReference type="Rhea" id="RHEA:20346"/>
    </physiologicalReaction>
</comment>
<comment type="cofactor">
    <cofactor evidence="2 3">
        <name>FAD</name>
        <dbReference type="ChEBI" id="CHEBI:57692"/>
    </cofactor>
    <text evidence="2 3">Binds 1 FAD per subunit.</text>
</comment>
<comment type="subunit">
    <text evidence="2 3 5">Homodimer.</text>
</comment>
<comment type="interaction">
    <interactant intactId="EBI-19497">
        <id>P29509</id>
    </interactant>
    <interactant intactId="EBI-29054">
        <id>P53879</id>
        <label>RHO5</label>
    </interactant>
    <organismsDiffer>false</organismsDiffer>
    <experiments>4</experiments>
</comment>
<comment type="interaction">
    <interactant intactId="EBI-19497">
        <id>P29509</id>
    </interactant>
    <interactant intactId="EBI-19502">
        <id>P38816</id>
        <label>TRR2</label>
    </interactant>
    <organismsDiffer>false</organismsDiffer>
    <experiments>5</experiments>
</comment>
<comment type="subcellular location">
    <subcellularLocation>
        <location>Cytoplasm</location>
    </subcellularLocation>
    <subcellularLocation>
        <location evidence="4">Mitochondrion intermembrane space</location>
    </subcellularLocation>
</comment>
<comment type="miscellaneous">
    <text evidence="8">The active site is a redox-active disulfide bond.</text>
</comment>
<comment type="miscellaneous">
    <text evidence="1">Present with 292000 molecules/cell in log phase SD medium.</text>
</comment>
<comment type="similarity">
    <text evidence="7">Belongs to the class-II pyridine nucleotide-disulfide oxidoreductase family.</text>
</comment>
<reference key="1">
    <citation type="journal article" date="1994" name="J. Biol. Chem.">
        <title>Thioredoxin-dependent peroxide reductase from yeast.</title>
        <authorList>
            <person name="Chae H.Z."/>
            <person name="Chung S.J."/>
            <person name="Rhee S.G."/>
        </authorList>
    </citation>
    <scope>NUCLEOTIDE SEQUENCE [GENOMIC DNA]</scope>
    <scope>PARTIAL PROTEIN SEQUENCE OF 2-16; 90-97; 126-137; 176-179; 233-238 AND 296-303</scope>
    <scope>FUNCTION</scope>
    <scope>CATALYTIC ACTIVITY</scope>
    <source>
        <strain>ATCC 200358 / YNN 295</strain>
    </source>
</reference>
<reference key="2">
    <citation type="journal article" date="1997" name="Nature">
        <title>The nucleotide sequence of Saccharomyces cerevisiae chromosome IV.</title>
        <authorList>
            <person name="Jacq C."/>
            <person name="Alt-Moerbe J."/>
            <person name="Andre B."/>
            <person name="Arnold W."/>
            <person name="Bahr A."/>
            <person name="Ballesta J.P.G."/>
            <person name="Bargues M."/>
            <person name="Baron L."/>
            <person name="Becker A."/>
            <person name="Biteau N."/>
            <person name="Bloecker H."/>
            <person name="Blugeon C."/>
            <person name="Boskovic J."/>
            <person name="Brandt P."/>
            <person name="Brueckner M."/>
            <person name="Buitrago M.J."/>
            <person name="Coster F."/>
            <person name="Delaveau T."/>
            <person name="del Rey F."/>
            <person name="Dujon B."/>
            <person name="Eide L.G."/>
            <person name="Garcia-Cantalejo J.M."/>
            <person name="Goffeau A."/>
            <person name="Gomez-Peris A."/>
            <person name="Granotier C."/>
            <person name="Hanemann V."/>
            <person name="Hankeln T."/>
            <person name="Hoheisel J.D."/>
            <person name="Jaeger W."/>
            <person name="Jimenez A."/>
            <person name="Jonniaux J.-L."/>
            <person name="Kraemer C."/>
            <person name="Kuester H."/>
            <person name="Laamanen P."/>
            <person name="Legros Y."/>
            <person name="Louis E.J."/>
            <person name="Moeller-Rieker S."/>
            <person name="Monnet A."/>
            <person name="Moro M."/>
            <person name="Mueller-Auer S."/>
            <person name="Nussbaumer B."/>
            <person name="Paricio N."/>
            <person name="Paulin L."/>
            <person name="Perea J."/>
            <person name="Perez-Alonso M."/>
            <person name="Perez-Ortin J.E."/>
            <person name="Pohl T.M."/>
            <person name="Prydz H."/>
            <person name="Purnelle B."/>
            <person name="Rasmussen S.W."/>
            <person name="Remacha M.A."/>
            <person name="Revuelta J.L."/>
            <person name="Rieger M."/>
            <person name="Salom D."/>
            <person name="Saluz H.P."/>
            <person name="Saiz J.E."/>
            <person name="Saren A.-M."/>
            <person name="Schaefer M."/>
            <person name="Scharfe M."/>
            <person name="Schmidt E.R."/>
            <person name="Schneider C."/>
            <person name="Scholler P."/>
            <person name="Schwarz S."/>
            <person name="Soler-Mira A."/>
            <person name="Urrestarazu L.A."/>
            <person name="Verhasselt P."/>
            <person name="Vissers S."/>
            <person name="Voet M."/>
            <person name="Volckaert G."/>
            <person name="Wagner G."/>
            <person name="Wambutt R."/>
            <person name="Wedler E."/>
            <person name="Wedler H."/>
            <person name="Woelfl S."/>
            <person name="Harris D.E."/>
            <person name="Bowman S."/>
            <person name="Brown D."/>
            <person name="Churcher C.M."/>
            <person name="Connor R."/>
            <person name="Dedman K."/>
            <person name="Gentles S."/>
            <person name="Hamlin N."/>
            <person name="Hunt S."/>
            <person name="Jones L."/>
            <person name="McDonald S."/>
            <person name="Murphy L.D."/>
            <person name="Niblett D."/>
            <person name="Odell C."/>
            <person name="Oliver K."/>
            <person name="Rajandream M.A."/>
            <person name="Richards C."/>
            <person name="Shore L."/>
            <person name="Walsh S.V."/>
            <person name="Barrell B.G."/>
            <person name="Dietrich F.S."/>
            <person name="Mulligan J.T."/>
            <person name="Allen E."/>
            <person name="Araujo R."/>
            <person name="Aviles E."/>
            <person name="Berno A."/>
            <person name="Carpenter J."/>
            <person name="Chen E."/>
            <person name="Cherry J.M."/>
            <person name="Chung E."/>
            <person name="Duncan M."/>
            <person name="Hunicke-Smith S."/>
            <person name="Hyman R.W."/>
            <person name="Komp C."/>
            <person name="Lashkari D."/>
            <person name="Lew H."/>
            <person name="Lin D."/>
            <person name="Mosedale D."/>
            <person name="Nakahara K."/>
            <person name="Namath A."/>
            <person name="Oefner P."/>
            <person name="Oh C."/>
            <person name="Petel F.X."/>
            <person name="Roberts D."/>
            <person name="Schramm S."/>
            <person name="Schroeder M."/>
            <person name="Shogren T."/>
            <person name="Shroff N."/>
            <person name="Winant A."/>
            <person name="Yelton M.A."/>
            <person name="Botstein D."/>
            <person name="Davis R.W."/>
            <person name="Johnston M."/>
            <person name="Andrews S."/>
            <person name="Brinkman R."/>
            <person name="Cooper J."/>
            <person name="Ding H."/>
            <person name="Du Z."/>
            <person name="Favello A."/>
            <person name="Fulton L."/>
            <person name="Gattung S."/>
            <person name="Greco T."/>
            <person name="Hallsworth K."/>
            <person name="Hawkins J."/>
            <person name="Hillier L.W."/>
            <person name="Jier M."/>
            <person name="Johnson D."/>
            <person name="Johnston L."/>
            <person name="Kirsten J."/>
            <person name="Kucaba T."/>
            <person name="Langston Y."/>
            <person name="Latreille P."/>
            <person name="Le T."/>
            <person name="Mardis E."/>
            <person name="Menezes S."/>
            <person name="Miller N."/>
            <person name="Nhan M."/>
            <person name="Pauley A."/>
            <person name="Peluso D."/>
            <person name="Rifkin L."/>
            <person name="Riles L."/>
            <person name="Taich A."/>
            <person name="Trevaskis E."/>
            <person name="Vignati D."/>
            <person name="Wilcox L."/>
            <person name="Wohldman P."/>
            <person name="Vaudin M."/>
            <person name="Wilson R."/>
            <person name="Waterston R."/>
            <person name="Albermann K."/>
            <person name="Hani J."/>
            <person name="Heumann K."/>
            <person name="Kleine K."/>
            <person name="Mewes H.-W."/>
            <person name="Zollner A."/>
            <person name="Zaccaria P."/>
        </authorList>
    </citation>
    <scope>NUCLEOTIDE SEQUENCE [LARGE SCALE GENOMIC DNA]</scope>
    <source>
        <strain>ATCC 204508 / S288c</strain>
    </source>
</reference>
<reference key="3">
    <citation type="journal article" date="2014" name="G3 (Bethesda)">
        <title>The reference genome sequence of Saccharomyces cerevisiae: Then and now.</title>
        <authorList>
            <person name="Engel S.R."/>
            <person name="Dietrich F.S."/>
            <person name="Fisk D.G."/>
            <person name="Binkley G."/>
            <person name="Balakrishnan R."/>
            <person name="Costanzo M.C."/>
            <person name="Dwight S.S."/>
            <person name="Hitz B.C."/>
            <person name="Karra K."/>
            <person name="Nash R.S."/>
            <person name="Weng S."/>
            <person name="Wong E.D."/>
            <person name="Lloyd P."/>
            <person name="Skrzypek M.S."/>
            <person name="Miyasato S.R."/>
            <person name="Simison M."/>
            <person name="Cherry J.M."/>
        </authorList>
    </citation>
    <scope>GENOME REANNOTATION</scope>
    <source>
        <strain>ATCC 204508 / S288c</strain>
    </source>
</reference>
<reference key="4">
    <citation type="journal article" date="2007" name="Genome Res.">
        <title>Approaching a complete repository of sequence-verified protein-encoding clones for Saccharomyces cerevisiae.</title>
        <authorList>
            <person name="Hu Y."/>
            <person name="Rolfs A."/>
            <person name="Bhullar B."/>
            <person name="Murthy T.V.S."/>
            <person name="Zhu C."/>
            <person name="Berger M.F."/>
            <person name="Camargo A.A."/>
            <person name="Kelley F."/>
            <person name="McCarron S."/>
            <person name="Jepson D."/>
            <person name="Richardson A."/>
            <person name="Raphael J."/>
            <person name="Moreira D."/>
            <person name="Taycher E."/>
            <person name="Zuo D."/>
            <person name="Mohr S."/>
            <person name="Kane M.F."/>
            <person name="Williamson J."/>
            <person name="Simpson A.J.G."/>
            <person name="Bulyk M.L."/>
            <person name="Harlow E."/>
            <person name="Marsischky G."/>
            <person name="Kolodner R.D."/>
            <person name="LaBaer J."/>
        </authorList>
    </citation>
    <scope>NUCLEOTIDE SEQUENCE [GENOMIC DNA]</scope>
    <source>
        <strain>ATCC 204508 / S288c</strain>
    </source>
</reference>
<reference key="5">
    <citation type="journal article" date="1986" name="Nucleic Acids Res.">
        <title>The TRP4 gene of Saccharomyces cerevisiae: isolation and structural analysis.</title>
        <authorList>
            <person name="Furter R."/>
            <person name="Paravicini G."/>
            <person name="Aebi M."/>
            <person name="Braus G."/>
            <person name="Prantl F."/>
            <person name="Niederberger P."/>
            <person name="Huetter R."/>
        </authorList>
    </citation>
    <scope>NUCLEOTIDE SEQUENCE [GENOMIC DNA] OF 261-319</scope>
</reference>
<reference key="6">
    <citation type="journal article" date="2003" name="Nature">
        <title>Global analysis of protein expression in yeast.</title>
        <authorList>
            <person name="Ghaemmaghami S."/>
            <person name="Huh W.-K."/>
            <person name="Bower K."/>
            <person name="Howson R.W."/>
            <person name="Belle A."/>
            <person name="Dephoure N."/>
            <person name="O'Shea E.K."/>
            <person name="Weissman J.S."/>
        </authorList>
    </citation>
    <scope>LEVEL OF PROTEIN EXPRESSION [LARGE SCALE ANALYSIS]</scope>
</reference>
<reference key="7">
    <citation type="journal article" date="2008" name="Mol. Cell. Proteomics">
        <title>A multidimensional chromatography technology for in-depth phosphoproteome analysis.</title>
        <authorList>
            <person name="Albuquerque C.P."/>
            <person name="Smolka M.B."/>
            <person name="Payne S.H."/>
            <person name="Bafna V."/>
            <person name="Eng J."/>
            <person name="Zhou H."/>
        </authorList>
    </citation>
    <scope>PHOSPHORYLATION [LARGE SCALE ANALYSIS] AT SER-303</scope>
    <scope>IDENTIFICATION BY MASS SPECTROMETRY [LARGE SCALE ANALYSIS]</scope>
</reference>
<reference key="8">
    <citation type="journal article" date="2012" name="Mol. Cell. Proteomics">
        <title>Intermembrane space proteome of yeast mitochondria.</title>
        <authorList>
            <person name="Voegtle F.N."/>
            <person name="Burkhart J.M."/>
            <person name="Rao S."/>
            <person name="Gerbeth C."/>
            <person name="Hinrichs J."/>
            <person name="Martinou J.C."/>
            <person name="Chacinska A."/>
            <person name="Sickmann A."/>
            <person name="Zahedi R.P."/>
            <person name="Meisinger C."/>
        </authorList>
    </citation>
    <scope>IDENTIFICATION BY MASS SPECTROMETRY</scope>
    <scope>SUBCELLULAR LOCATION [LARGE SCALE ANALYSIS]</scope>
</reference>
<reference key="9">
    <citation type="journal article" date="2009" name="Biochim. Biophys. Acta">
        <title>Crystal structure of Saccharomyces cerevisiae cytoplasmic thioredoxin reductase Trr1 reveals the structural basis for species-specific recognition of thioredoxin.</title>
        <authorList>
            <person name="Zhang Z."/>
            <person name="Bao R."/>
            <person name="Zhang Y."/>
            <person name="Yu J."/>
            <person name="Zhou C.Z."/>
            <person name="Chen Y."/>
        </authorList>
    </citation>
    <scope>X-RAY CRYSTALLOGRAPHY (2.80 ANGSTROMS) OF 2-319 IN COMPLEX WITH FAD</scope>
    <scope>COFACTOR</scope>
    <scope>SUBUNIT</scope>
</reference>
<reference key="10">
    <citation type="journal article" date="2010" name="Biochemistry">
        <title>Insights into the specificity of thioredoxin reductase-thioredoxin interactions. A structural and functional investigation of the yeast thioredoxin system.</title>
        <authorList>
            <person name="Oliveira M.A."/>
            <person name="Discola K.F."/>
            <person name="Alves S.V."/>
            <person name="Medrano F.J."/>
            <person name="Guimaraes B.G."/>
            <person name="Netto L.E."/>
        </authorList>
    </citation>
    <scope>X-RAY CRYSTALLOGRAPHY (2.40 ANGSTROMS) OF 2-319 IN COMPLEX WITH FAD</scope>
    <scope>FUNCTION</scope>
    <scope>COFACTOR</scope>
    <scope>SUBUNIT</scope>
    <scope>DISULFIDE BOND</scope>
</reference>
<evidence type="ECO:0000269" key="1">
    <source>
    </source>
</evidence>
<evidence type="ECO:0000269" key="2">
    <source>
    </source>
</evidence>
<evidence type="ECO:0000269" key="3">
    <source>
    </source>
</evidence>
<evidence type="ECO:0000269" key="4">
    <source>
    </source>
</evidence>
<evidence type="ECO:0000269" key="5">
    <source>
    </source>
</evidence>
<evidence type="ECO:0000303" key="6">
    <source>
    </source>
</evidence>
<evidence type="ECO:0000305" key="7"/>
<evidence type="ECO:0000305" key="8">
    <source>
    </source>
</evidence>
<evidence type="ECO:0007744" key="9">
    <source>
    </source>
</evidence>
<evidence type="ECO:0007829" key="10">
    <source>
        <dbReference type="PDB" id="3D8X"/>
    </source>
</evidence>
<evidence type="ECO:0007829" key="11">
    <source>
        <dbReference type="PDB" id="3ITJ"/>
    </source>
</evidence>
<protein>
    <recommendedName>
        <fullName>Thioredoxin reductase 1</fullName>
        <shortName>TR</shortName>
        <shortName>TrxR</shortName>
        <ecNumber evidence="5">1.8.1.9</ecNumber>
    </recommendedName>
    <alternativeName>
        <fullName evidence="6">Thioredoxin peroxidase 1</fullName>
        <shortName evidence="6">TPx</shortName>
    </alternativeName>
    <alternativeName>
        <fullName evidence="6">Thioredoxin-dependent peroxide reductase 1</fullName>
    </alternativeName>
</protein>
<accession>P29509</accession>
<accession>D6VSY3</accession>
<organism>
    <name type="scientific">Saccharomyces cerevisiae (strain ATCC 204508 / S288c)</name>
    <name type="common">Baker's yeast</name>
    <dbReference type="NCBI Taxonomy" id="559292"/>
    <lineage>
        <taxon>Eukaryota</taxon>
        <taxon>Fungi</taxon>
        <taxon>Dikarya</taxon>
        <taxon>Ascomycota</taxon>
        <taxon>Saccharomycotina</taxon>
        <taxon>Saccharomycetes</taxon>
        <taxon>Saccharomycetales</taxon>
        <taxon>Saccharomycetaceae</taxon>
        <taxon>Saccharomyces</taxon>
    </lineage>
</organism>